<feature type="chain" id="PRO_0000159877" description="3-dehydroquinate dehydratase 1">
    <location>
        <begin position="1"/>
        <end position="155"/>
    </location>
</feature>
<feature type="active site" description="Proton acceptor" evidence="1">
    <location>
        <position position="28"/>
    </location>
</feature>
<feature type="active site" description="Proton donor" evidence="1">
    <location>
        <position position="106"/>
    </location>
</feature>
<feature type="binding site" evidence="1">
    <location>
        <position position="80"/>
    </location>
    <ligand>
        <name>substrate</name>
    </ligand>
</feature>
<feature type="binding site" evidence="1">
    <location>
        <position position="86"/>
    </location>
    <ligand>
        <name>substrate</name>
    </ligand>
</feature>
<feature type="binding site" evidence="1">
    <location>
        <position position="93"/>
    </location>
    <ligand>
        <name>substrate</name>
    </ligand>
</feature>
<feature type="binding site" evidence="1">
    <location>
        <begin position="107"/>
        <end position="108"/>
    </location>
    <ligand>
        <name>substrate</name>
    </ligand>
</feature>
<feature type="binding site" evidence="1">
    <location>
        <position position="117"/>
    </location>
    <ligand>
        <name>substrate</name>
    </ligand>
</feature>
<feature type="site" description="Transition state stabilizer" evidence="1">
    <location>
        <position position="23"/>
    </location>
</feature>
<dbReference type="EC" id="4.2.1.10"/>
<dbReference type="EMBL" id="BA000040">
    <property type="protein sequence ID" value="BAC49557.1"/>
    <property type="molecule type" value="Genomic_DNA"/>
</dbReference>
<dbReference type="RefSeq" id="NP_770932.1">
    <property type="nucleotide sequence ID" value="NC_004463.1"/>
</dbReference>
<dbReference type="RefSeq" id="WP_011087065.1">
    <property type="nucleotide sequence ID" value="NC_004463.1"/>
</dbReference>
<dbReference type="SMR" id="Q89MA1"/>
<dbReference type="STRING" id="224911.AAV28_18520"/>
<dbReference type="EnsemblBacteria" id="BAC49557">
    <property type="protein sequence ID" value="BAC49557"/>
    <property type="gene ID" value="BAC49557"/>
</dbReference>
<dbReference type="GeneID" id="46491288"/>
<dbReference type="KEGG" id="bja:bll4292"/>
<dbReference type="PATRIC" id="fig|224911.44.peg.4032"/>
<dbReference type="eggNOG" id="COG0757">
    <property type="taxonomic scope" value="Bacteria"/>
</dbReference>
<dbReference type="HOGENOM" id="CLU_090968_2_0_5"/>
<dbReference type="InParanoid" id="Q89MA1"/>
<dbReference type="OrthoDB" id="9790793at2"/>
<dbReference type="PhylomeDB" id="Q89MA1"/>
<dbReference type="UniPathway" id="UPA00053">
    <property type="reaction ID" value="UER00086"/>
</dbReference>
<dbReference type="Proteomes" id="UP000002526">
    <property type="component" value="Chromosome"/>
</dbReference>
<dbReference type="GO" id="GO:0003855">
    <property type="term" value="F:3-dehydroquinate dehydratase activity"/>
    <property type="evidence" value="ECO:0000318"/>
    <property type="project" value="GO_Central"/>
</dbReference>
<dbReference type="GO" id="GO:0008652">
    <property type="term" value="P:amino acid biosynthetic process"/>
    <property type="evidence" value="ECO:0007669"/>
    <property type="project" value="UniProtKB-KW"/>
</dbReference>
<dbReference type="GO" id="GO:0009073">
    <property type="term" value="P:aromatic amino acid family biosynthetic process"/>
    <property type="evidence" value="ECO:0007669"/>
    <property type="project" value="UniProtKB-KW"/>
</dbReference>
<dbReference type="GO" id="GO:0009423">
    <property type="term" value="P:chorismate biosynthetic process"/>
    <property type="evidence" value="ECO:0007669"/>
    <property type="project" value="UniProtKB-UniRule"/>
</dbReference>
<dbReference type="GO" id="GO:0019631">
    <property type="term" value="P:quinate catabolic process"/>
    <property type="evidence" value="ECO:0000318"/>
    <property type="project" value="GO_Central"/>
</dbReference>
<dbReference type="CDD" id="cd00466">
    <property type="entry name" value="DHQase_II"/>
    <property type="match status" value="1"/>
</dbReference>
<dbReference type="Gene3D" id="3.40.50.9100">
    <property type="entry name" value="Dehydroquinase, class II"/>
    <property type="match status" value="1"/>
</dbReference>
<dbReference type="HAMAP" id="MF_00169">
    <property type="entry name" value="AroQ"/>
    <property type="match status" value="1"/>
</dbReference>
<dbReference type="InterPro" id="IPR001874">
    <property type="entry name" value="DHquinase_II"/>
</dbReference>
<dbReference type="InterPro" id="IPR018509">
    <property type="entry name" value="DHquinase_II_CS"/>
</dbReference>
<dbReference type="InterPro" id="IPR036441">
    <property type="entry name" value="DHquinase_II_sf"/>
</dbReference>
<dbReference type="NCBIfam" id="TIGR01088">
    <property type="entry name" value="aroQ"/>
    <property type="match status" value="1"/>
</dbReference>
<dbReference type="NCBIfam" id="NF003805">
    <property type="entry name" value="PRK05395.1-2"/>
    <property type="match status" value="1"/>
</dbReference>
<dbReference type="NCBIfam" id="NF003806">
    <property type="entry name" value="PRK05395.1-3"/>
    <property type="match status" value="1"/>
</dbReference>
<dbReference type="NCBIfam" id="NF003807">
    <property type="entry name" value="PRK05395.1-4"/>
    <property type="match status" value="1"/>
</dbReference>
<dbReference type="PANTHER" id="PTHR21272">
    <property type="entry name" value="CATABOLIC 3-DEHYDROQUINASE"/>
    <property type="match status" value="1"/>
</dbReference>
<dbReference type="PANTHER" id="PTHR21272:SF3">
    <property type="entry name" value="CATABOLIC 3-DEHYDROQUINASE"/>
    <property type="match status" value="1"/>
</dbReference>
<dbReference type="Pfam" id="PF01220">
    <property type="entry name" value="DHquinase_II"/>
    <property type="match status" value="1"/>
</dbReference>
<dbReference type="PIRSF" id="PIRSF001399">
    <property type="entry name" value="DHquinase_II"/>
    <property type="match status" value="1"/>
</dbReference>
<dbReference type="SUPFAM" id="SSF52304">
    <property type="entry name" value="Type II 3-dehydroquinate dehydratase"/>
    <property type="match status" value="1"/>
</dbReference>
<dbReference type="PROSITE" id="PS01029">
    <property type="entry name" value="DEHYDROQUINASE_II"/>
    <property type="match status" value="1"/>
</dbReference>
<keyword id="KW-0028">Amino-acid biosynthesis</keyword>
<keyword id="KW-0057">Aromatic amino acid biosynthesis</keyword>
<keyword id="KW-0456">Lyase</keyword>
<keyword id="KW-1185">Reference proteome</keyword>
<organism>
    <name type="scientific">Bradyrhizobium diazoefficiens (strain JCM 10833 / BCRC 13528 / IAM 13628 / NBRC 14792 / USDA 110)</name>
    <dbReference type="NCBI Taxonomy" id="224911"/>
    <lineage>
        <taxon>Bacteria</taxon>
        <taxon>Pseudomonadati</taxon>
        <taxon>Pseudomonadota</taxon>
        <taxon>Alphaproteobacteria</taxon>
        <taxon>Hyphomicrobiales</taxon>
        <taxon>Nitrobacteraceae</taxon>
        <taxon>Bradyrhizobium</taxon>
    </lineage>
</organism>
<protein>
    <recommendedName>
        <fullName>3-dehydroquinate dehydratase 1</fullName>
        <shortName>3-dehydroquinase 1</shortName>
        <ecNumber>4.2.1.10</ecNumber>
    </recommendedName>
    <alternativeName>
        <fullName>Type II DHQase 1</fullName>
    </alternativeName>
</protein>
<accession>Q89MA1</accession>
<gene>
    <name type="primary">aroQ1</name>
    <name type="ordered locus">bll4292</name>
</gene>
<evidence type="ECO:0000250" key="1"/>
<evidence type="ECO:0000305" key="2"/>
<comment type="function">
    <text evidence="1">Catalyzes a trans-dehydration via an enolate intermediate.</text>
</comment>
<comment type="catalytic activity">
    <reaction>
        <text>3-dehydroquinate = 3-dehydroshikimate + H2O</text>
        <dbReference type="Rhea" id="RHEA:21096"/>
        <dbReference type="ChEBI" id="CHEBI:15377"/>
        <dbReference type="ChEBI" id="CHEBI:16630"/>
        <dbReference type="ChEBI" id="CHEBI:32364"/>
        <dbReference type="EC" id="4.2.1.10"/>
    </reaction>
</comment>
<comment type="pathway">
    <text>Metabolic intermediate biosynthesis; chorismate biosynthesis; chorismate from D-erythrose 4-phosphate and phosphoenolpyruvate: step 3/7.</text>
</comment>
<comment type="subunit">
    <text evidence="1">Homododecamer.</text>
</comment>
<comment type="similarity">
    <text evidence="2">Belongs to the type-II 3-dehydroquinase family.</text>
</comment>
<sequence length="155" mass="16743">MAEPATDTILVLNGPNLNMLGTREPEKYGHATLADVEALCRETAASFGLKADCRQSNREGELIDFIHEAHARKMKGIIINAGGYSHTSIALHDALLAVQIPTVEVHVTNIHARESFRHHSYTARAAFASLCGFGIEGYRLAIQGLAAKLGLKPKA</sequence>
<reference key="1">
    <citation type="journal article" date="2002" name="DNA Res.">
        <title>Complete genomic sequence of nitrogen-fixing symbiotic bacterium Bradyrhizobium japonicum USDA110.</title>
        <authorList>
            <person name="Kaneko T."/>
            <person name="Nakamura Y."/>
            <person name="Sato S."/>
            <person name="Minamisawa K."/>
            <person name="Uchiumi T."/>
            <person name="Sasamoto S."/>
            <person name="Watanabe A."/>
            <person name="Idesawa K."/>
            <person name="Iriguchi M."/>
            <person name="Kawashima K."/>
            <person name="Kohara M."/>
            <person name="Matsumoto M."/>
            <person name="Shimpo S."/>
            <person name="Tsuruoka H."/>
            <person name="Wada T."/>
            <person name="Yamada M."/>
            <person name="Tabata S."/>
        </authorList>
    </citation>
    <scope>NUCLEOTIDE SEQUENCE [LARGE SCALE GENOMIC DNA]</scope>
    <source>
        <strain>JCM 10833 / BCRC 13528 / IAM 13628 / NBRC 14792 / USDA 110</strain>
    </source>
</reference>
<name>AROQ1_BRADU</name>
<proteinExistence type="inferred from homology"/>